<organism>
    <name type="scientific">Acorus calamus var. americanus</name>
    <name type="common">American sweet flag</name>
    <name type="synonym">Acorus americanus</name>
    <dbReference type="NCBI Taxonomy" id="263995"/>
    <lineage>
        <taxon>Eukaryota</taxon>
        <taxon>Viridiplantae</taxon>
        <taxon>Streptophyta</taxon>
        <taxon>Embryophyta</taxon>
        <taxon>Tracheophyta</taxon>
        <taxon>Spermatophyta</taxon>
        <taxon>Magnoliopsida</taxon>
        <taxon>Liliopsida</taxon>
        <taxon>Acoraceae</taxon>
        <taxon>Acorus</taxon>
    </lineage>
</organism>
<accession>P0CC20</accession>
<accession>A9LYE5</accession>
<accession>A9QAR6</accession>
<comment type="function">
    <text evidence="1">NDH shuttles electrons from NAD(P)H:plastoquinone, via FMN and iron-sulfur (Fe-S) centers, to quinones in the photosynthetic chain and possibly in a chloroplast respiratory chain. The immediate electron acceptor for the enzyme in this species is believed to be plastoquinone. Couples the redox reaction to proton translocation, and thus conserves the redox energy in a proton gradient.</text>
</comment>
<comment type="catalytic activity">
    <reaction evidence="1">
        <text>a plastoquinone + NADH + (n+1) H(+)(in) = a plastoquinol + NAD(+) + n H(+)(out)</text>
        <dbReference type="Rhea" id="RHEA:42608"/>
        <dbReference type="Rhea" id="RHEA-COMP:9561"/>
        <dbReference type="Rhea" id="RHEA-COMP:9562"/>
        <dbReference type="ChEBI" id="CHEBI:15378"/>
        <dbReference type="ChEBI" id="CHEBI:17757"/>
        <dbReference type="ChEBI" id="CHEBI:57540"/>
        <dbReference type="ChEBI" id="CHEBI:57945"/>
        <dbReference type="ChEBI" id="CHEBI:62192"/>
    </reaction>
</comment>
<comment type="catalytic activity">
    <reaction evidence="1">
        <text>a plastoquinone + NADPH + (n+1) H(+)(in) = a plastoquinol + NADP(+) + n H(+)(out)</text>
        <dbReference type="Rhea" id="RHEA:42612"/>
        <dbReference type="Rhea" id="RHEA-COMP:9561"/>
        <dbReference type="Rhea" id="RHEA-COMP:9562"/>
        <dbReference type="ChEBI" id="CHEBI:15378"/>
        <dbReference type="ChEBI" id="CHEBI:17757"/>
        <dbReference type="ChEBI" id="CHEBI:57783"/>
        <dbReference type="ChEBI" id="CHEBI:58349"/>
        <dbReference type="ChEBI" id="CHEBI:62192"/>
    </reaction>
</comment>
<comment type="subunit">
    <text evidence="1">NDH is composed of at least 16 different subunits, 5 of which are encoded in the nucleus.</text>
</comment>
<comment type="subcellular location">
    <subcellularLocation>
        <location evidence="1">Plastid</location>
        <location evidence="1">Chloroplast thylakoid membrane</location>
        <topology evidence="1">Multi-pass membrane protein</topology>
    </subcellularLocation>
</comment>
<comment type="similarity">
    <text evidence="1">Belongs to the complex I subunit 2 family.</text>
</comment>
<geneLocation type="chloroplast"/>
<sequence>MIWHVQNENFILDSTRIFMKAFHLLLFDGSFIFPECILIFGLILLLMIDSTSDQKDRPWFYFISSTSLVMSIAALLFRWREEPMISFSGNFQTNNFNEIFQFLILLCSTLCIPLSVEYIECTEMAITEFLLFVLTATLGGMFLCGANDSITIFVAPECFSLCSYLLSGYTKRDVRSNEATMKYLLMGGASSSILVHGFSWLYGLSGGEIELQEIVNGLINTQMYNSPGISIALIFITVGIGFKLSLAPFHQWTPDVYEGSPTPVVAFLSVTSKVAASASATRIFDIPFYFSSNEWHLLLEILAILSMILGNLIAITQTSMKRMLAYSSIGQIGYVIIGIIVGDSNDGYASMITYMLFYISMNLGTFARIVLFGLRTGTDNIRDYAGLYTKDPFLALSLALCLLSLGGLPPLAGFFGKLHLFWCGWQAGLYFLVSIGLLTSVVSIYYYLKIIKLLMTGRNQEITPHVRNYRRSPLRSNNSIELSMIVCVIASTIPGISMNPILAIAQDTLF</sequence>
<proteinExistence type="inferred from homology"/>
<name>NU2C1_ACOCI</name>
<evidence type="ECO:0000255" key="1">
    <source>
        <dbReference type="HAMAP-Rule" id="MF_00445"/>
    </source>
</evidence>
<protein>
    <recommendedName>
        <fullName evidence="1">NAD(P)H-quinone oxidoreductase subunit 2 A, chloroplastic</fullName>
        <ecNumber evidence="1">7.1.1.-</ecNumber>
    </recommendedName>
    <alternativeName>
        <fullName evidence="1">NAD(P)H dehydrogenase, subunit 2 A</fullName>
    </alternativeName>
    <alternativeName>
        <fullName evidence="1">NADH-plastoquinone oxidoreductase subunit 2 A</fullName>
    </alternativeName>
</protein>
<feature type="chain" id="PRO_0000344258" description="NAD(P)H-quinone oxidoreductase subunit 2 A, chloroplastic">
    <location>
        <begin position="1"/>
        <end position="510"/>
    </location>
</feature>
<feature type="transmembrane region" description="Helical" evidence="1">
    <location>
        <begin position="24"/>
        <end position="44"/>
    </location>
</feature>
<feature type="transmembrane region" description="Helical" evidence="1">
    <location>
        <begin position="59"/>
        <end position="79"/>
    </location>
</feature>
<feature type="transmembrane region" description="Helical" evidence="1">
    <location>
        <begin position="99"/>
        <end position="119"/>
    </location>
</feature>
<feature type="transmembrane region" description="Helical" evidence="1">
    <location>
        <begin position="124"/>
        <end position="144"/>
    </location>
</feature>
<feature type="transmembrane region" description="Helical" evidence="1">
    <location>
        <begin position="150"/>
        <end position="170"/>
    </location>
</feature>
<feature type="transmembrane region" description="Helical" evidence="1">
    <location>
        <begin position="184"/>
        <end position="204"/>
    </location>
</feature>
<feature type="transmembrane region" description="Helical" evidence="1">
    <location>
        <begin position="229"/>
        <end position="249"/>
    </location>
</feature>
<feature type="transmembrane region" description="Helical" evidence="1">
    <location>
        <begin position="295"/>
        <end position="315"/>
    </location>
</feature>
<feature type="transmembrane region" description="Helical" evidence="1">
    <location>
        <begin position="323"/>
        <end position="343"/>
    </location>
</feature>
<feature type="transmembrane region" description="Helical" evidence="1">
    <location>
        <begin position="354"/>
        <end position="374"/>
    </location>
</feature>
<feature type="transmembrane region" description="Helical" evidence="1">
    <location>
        <begin position="395"/>
        <end position="415"/>
    </location>
</feature>
<feature type="transmembrane region" description="Helical" evidence="1">
    <location>
        <begin position="418"/>
        <end position="438"/>
    </location>
</feature>
<feature type="transmembrane region" description="Helical" evidence="1">
    <location>
        <begin position="484"/>
        <end position="504"/>
    </location>
</feature>
<keyword id="KW-0150">Chloroplast</keyword>
<keyword id="KW-0472">Membrane</keyword>
<keyword id="KW-0520">NAD</keyword>
<keyword id="KW-0521">NADP</keyword>
<keyword id="KW-0934">Plastid</keyword>
<keyword id="KW-0618">Plastoquinone</keyword>
<keyword id="KW-0874">Quinone</keyword>
<keyword id="KW-0793">Thylakoid</keyword>
<keyword id="KW-1278">Translocase</keyword>
<keyword id="KW-0812">Transmembrane</keyword>
<keyword id="KW-1133">Transmembrane helix</keyword>
<keyword id="KW-0813">Transport</keyword>
<gene>
    <name evidence="1" type="primary">ndhB1</name>
</gene>
<reference key="1">
    <citation type="journal article" date="2007" name="Proc. Natl. Acad. Sci. U.S.A.">
        <title>Analysis of 81 genes from 64 plastid genomes resolves relationships in angiosperms and identifies genome-scale evolutionary patterns.</title>
        <authorList>
            <person name="Jansen R.K."/>
            <person name="Cai Z."/>
            <person name="Raubeson L.A."/>
            <person name="Daniell H."/>
            <person name="dePamphilis C.W."/>
            <person name="Leebens-Mack J."/>
            <person name="Muller K.F."/>
            <person name="Guisinger-Bellian M."/>
            <person name="Haberle R.C."/>
            <person name="Hansen A.K."/>
            <person name="Chumley T.W."/>
            <person name="Lee S.B."/>
            <person name="Peery R."/>
            <person name="McNeal J.R."/>
            <person name="Kuehl J.V."/>
            <person name="Boore J.L."/>
        </authorList>
    </citation>
    <scope>NUCLEOTIDE SEQUENCE [GENOMIC DNA]</scope>
</reference>
<reference key="2">
    <citation type="submission" date="2007-11" db="EMBL/GenBank/DDBJ databases">
        <title>The complete chloroplast genome of Acorus americanus.</title>
        <authorList>
            <person name="Peery R.M."/>
            <person name="Chumley T.W."/>
            <person name="Kuehl J.V."/>
            <person name="Boore J.L."/>
            <person name="Raubeson L.A."/>
        </authorList>
    </citation>
    <scope>NUCLEOTIDE SEQUENCE [LARGE SCALE GENOMIC DNA]</scope>
</reference>
<dbReference type="EC" id="7.1.1.-" evidence="1"/>
<dbReference type="EMBL" id="EU016718">
    <property type="protein sequence ID" value="ABU85159.1"/>
    <property type="molecule type" value="Genomic_DNA"/>
</dbReference>
<dbReference type="EMBL" id="EU273602">
    <property type="protein sequence ID" value="ABX38788.1"/>
    <property type="molecule type" value="Genomic_DNA"/>
</dbReference>
<dbReference type="SMR" id="P0CC20"/>
<dbReference type="GO" id="GO:0009535">
    <property type="term" value="C:chloroplast thylakoid membrane"/>
    <property type="evidence" value="ECO:0007669"/>
    <property type="project" value="UniProtKB-SubCell"/>
</dbReference>
<dbReference type="GO" id="GO:0008137">
    <property type="term" value="F:NADH dehydrogenase (ubiquinone) activity"/>
    <property type="evidence" value="ECO:0007669"/>
    <property type="project" value="InterPro"/>
</dbReference>
<dbReference type="GO" id="GO:0048038">
    <property type="term" value="F:quinone binding"/>
    <property type="evidence" value="ECO:0007669"/>
    <property type="project" value="UniProtKB-KW"/>
</dbReference>
<dbReference type="GO" id="GO:0042773">
    <property type="term" value="P:ATP synthesis coupled electron transport"/>
    <property type="evidence" value="ECO:0007669"/>
    <property type="project" value="InterPro"/>
</dbReference>
<dbReference type="GO" id="GO:0019684">
    <property type="term" value="P:photosynthesis, light reaction"/>
    <property type="evidence" value="ECO:0007669"/>
    <property type="project" value="UniProtKB-UniRule"/>
</dbReference>
<dbReference type="HAMAP" id="MF_00445">
    <property type="entry name" value="NDH1_NuoN_1"/>
    <property type="match status" value="1"/>
</dbReference>
<dbReference type="InterPro" id="IPR010096">
    <property type="entry name" value="NADH-Q_OxRdtase_suN/2"/>
</dbReference>
<dbReference type="InterPro" id="IPR001750">
    <property type="entry name" value="ND/Mrp_TM"/>
</dbReference>
<dbReference type="InterPro" id="IPR045693">
    <property type="entry name" value="Ndh2_N"/>
</dbReference>
<dbReference type="NCBIfam" id="TIGR01770">
    <property type="entry name" value="NDH_I_N"/>
    <property type="match status" value="1"/>
</dbReference>
<dbReference type="NCBIfam" id="NF002701">
    <property type="entry name" value="PRK02504.1"/>
    <property type="match status" value="1"/>
</dbReference>
<dbReference type="PANTHER" id="PTHR22773">
    <property type="entry name" value="NADH DEHYDROGENASE"/>
    <property type="match status" value="1"/>
</dbReference>
<dbReference type="Pfam" id="PF19530">
    <property type="entry name" value="Ndh2_N"/>
    <property type="match status" value="1"/>
</dbReference>
<dbReference type="Pfam" id="PF00361">
    <property type="entry name" value="Proton_antipo_M"/>
    <property type="match status" value="1"/>
</dbReference>
<dbReference type="PRINTS" id="PR01434">
    <property type="entry name" value="NADHDHGNASE5"/>
</dbReference>